<feature type="chain" id="PRO_1000022025" description="Small heat shock protein IbpA">
    <location>
        <begin position="1"/>
        <end position="137"/>
    </location>
</feature>
<feature type="domain" description="sHSP" evidence="2">
    <location>
        <begin position="28"/>
        <end position="137"/>
    </location>
</feature>
<accession>Q0SYN0</accession>
<proteinExistence type="inferred from homology"/>
<reference key="1">
    <citation type="journal article" date="2006" name="BMC Genomics">
        <title>Complete genome sequence of Shigella flexneri 5b and comparison with Shigella flexneri 2a.</title>
        <authorList>
            <person name="Nie H."/>
            <person name="Yang F."/>
            <person name="Zhang X."/>
            <person name="Yang J."/>
            <person name="Chen L."/>
            <person name="Wang J."/>
            <person name="Xiong Z."/>
            <person name="Peng J."/>
            <person name="Sun L."/>
            <person name="Dong J."/>
            <person name="Xue Y."/>
            <person name="Xu X."/>
            <person name="Chen S."/>
            <person name="Yao Z."/>
            <person name="Shen Y."/>
            <person name="Jin Q."/>
        </authorList>
    </citation>
    <scope>NUCLEOTIDE SEQUENCE [LARGE SCALE GENOMIC DNA]</scope>
    <source>
        <strain>8401</strain>
    </source>
</reference>
<keyword id="KW-0143">Chaperone</keyword>
<keyword id="KW-0963">Cytoplasm</keyword>
<keyword id="KW-0346">Stress response</keyword>
<sequence length="137" mass="15774">MRNFDLSPLYRSAIGFDRLFNHLENNQSQSNGGYPPYNVELVDENHYRIAIAVAGFAESELEITAQDNLLVVKGAHADEQKERTYLYQGIAERNFERKFQLAENIHVRGANLVNGLLYIDLERVIPEAKKPRRIEIN</sequence>
<dbReference type="EMBL" id="CP000266">
    <property type="protein sequence ID" value="ABF05835.1"/>
    <property type="molecule type" value="Genomic_DNA"/>
</dbReference>
<dbReference type="RefSeq" id="WP_001243437.1">
    <property type="nucleotide sequence ID" value="NC_008258.1"/>
</dbReference>
<dbReference type="SMR" id="Q0SYN0"/>
<dbReference type="GeneID" id="93778428"/>
<dbReference type="KEGG" id="sfv:SFV_3824"/>
<dbReference type="HOGENOM" id="CLU_046737_4_2_6"/>
<dbReference type="Proteomes" id="UP000000659">
    <property type="component" value="Chromosome"/>
</dbReference>
<dbReference type="GO" id="GO:0005737">
    <property type="term" value="C:cytoplasm"/>
    <property type="evidence" value="ECO:0007669"/>
    <property type="project" value="UniProtKB-SubCell"/>
</dbReference>
<dbReference type="GO" id="GO:0050821">
    <property type="term" value="P:protein stabilization"/>
    <property type="evidence" value="ECO:0007669"/>
    <property type="project" value="UniProtKB-UniRule"/>
</dbReference>
<dbReference type="CDD" id="cd06470">
    <property type="entry name" value="ACD_IbpA-B_like"/>
    <property type="match status" value="1"/>
</dbReference>
<dbReference type="FunFam" id="2.60.40.790:FF:000002">
    <property type="entry name" value="Small heat shock protein IbpA"/>
    <property type="match status" value="1"/>
</dbReference>
<dbReference type="Gene3D" id="2.60.40.790">
    <property type="match status" value="1"/>
</dbReference>
<dbReference type="HAMAP" id="MF_02000">
    <property type="entry name" value="HSP20_IbpA"/>
    <property type="match status" value="1"/>
</dbReference>
<dbReference type="InterPro" id="IPR002068">
    <property type="entry name" value="A-crystallin/Hsp20_dom"/>
</dbReference>
<dbReference type="InterPro" id="IPR037913">
    <property type="entry name" value="ACD_IbpA/B"/>
</dbReference>
<dbReference type="InterPro" id="IPR008978">
    <property type="entry name" value="HSP20-like_chaperone"/>
</dbReference>
<dbReference type="InterPro" id="IPR023728">
    <property type="entry name" value="HSP20_IbpA"/>
</dbReference>
<dbReference type="NCBIfam" id="NF008013">
    <property type="entry name" value="PRK10743.1"/>
    <property type="match status" value="1"/>
</dbReference>
<dbReference type="PANTHER" id="PTHR47062">
    <property type="match status" value="1"/>
</dbReference>
<dbReference type="PANTHER" id="PTHR47062:SF1">
    <property type="entry name" value="SMALL HEAT SHOCK PROTEIN IBPA"/>
    <property type="match status" value="1"/>
</dbReference>
<dbReference type="Pfam" id="PF00011">
    <property type="entry name" value="HSP20"/>
    <property type="match status" value="1"/>
</dbReference>
<dbReference type="SUPFAM" id="SSF49764">
    <property type="entry name" value="HSP20-like chaperones"/>
    <property type="match status" value="1"/>
</dbReference>
<dbReference type="PROSITE" id="PS01031">
    <property type="entry name" value="SHSP"/>
    <property type="match status" value="1"/>
</dbReference>
<evidence type="ECO:0000255" key="1">
    <source>
        <dbReference type="HAMAP-Rule" id="MF_02000"/>
    </source>
</evidence>
<evidence type="ECO:0000255" key="2">
    <source>
        <dbReference type="PROSITE-ProRule" id="PRU00285"/>
    </source>
</evidence>
<gene>
    <name evidence="1" type="primary">ibpA</name>
    <name type="ordered locus">SFV_3824</name>
</gene>
<protein>
    <recommendedName>
        <fullName evidence="1">Small heat shock protein IbpA</fullName>
    </recommendedName>
    <alternativeName>
        <fullName evidence="1">16 kDa heat shock protein A</fullName>
    </alternativeName>
</protein>
<organism>
    <name type="scientific">Shigella flexneri serotype 5b (strain 8401)</name>
    <dbReference type="NCBI Taxonomy" id="373384"/>
    <lineage>
        <taxon>Bacteria</taxon>
        <taxon>Pseudomonadati</taxon>
        <taxon>Pseudomonadota</taxon>
        <taxon>Gammaproteobacteria</taxon>
        <taxon>Enterobacterales</taxon>
        <taxon>Enterobacteriaceae</taxon>
        <taxon>Shigella</taxon>
    </lineage>
</organism>
<comment type="function">
    <text evidence="1">Associates with aggregated proteins, together with IbpB, to stabilize and protect them from irreversible denaturation and extensive proteolysis during heat shock and oxidative stress. Aggregated proteins bound to the IbpAB complex are more efficiently refolded and reactivated by the ATP-dependent chaperone systems ClpB and DnaK/DnaJ/GrpE. Its activity is ATP-independent.</text>
</comment>
<comment type="subunit">
    <text evidence="1">Monomer. Forms homomultimers of about 100-150 subunits at optimal growth temperatures. Conformation changes to monomers at high temperatures or high ionic concentrations.</text>
</comment>
<comment type="subcellular location">
    <subcellularLocation>
        <location evidence="1">Cytoplasm</location>
    </subcellularLocation>
</comment>
<comment type="similarity">
    <text evidence="1 2">Belongs to the small heat shock protein (HSP20) family.</text>
</comment>
<name>IBPA_SHIF8</name>